<name>THIC_CLOBM</name>
<gene>
    <name evidence="1" type="primary">thiC</name>
    <name type="ordered locus">CLK_2303</name>
</gene>
<keyword id="KW-0004">4Fe-4S</keyword>
<keyword id="KW-0408">Iron</keyword>
<keyword id="KW-0411">Iron-sulfur</keyword>
<keyword id="KW-0456">Lyase</keyword>
<keyword id="KW-0479">Metal-binding</keyword>
<keyword id="KW-0949">S-adenosyl-L-methionine</keyword>
<keyword id="KW-0784">Thiamine biosynthesis</keyword>
<keyword id="KW-0862">Zinc</keyword>
<sequence>MNYTTQMDAAKKGIVTKEMEIVAKKENMNVKDLMELVSKGKVAIPANKNHKSLDPEGIGQGLRTKINVNLGISKDCYNIDMELEKVQKAIDMKAEAIMDLSCFGKTEEFRKRLIDMSPAIIGTVPIYDAVGFYDKELKDITSEEFLKVAEKHVENGADFLTIHVGMNRKTASTFKKNPRRMNIVSRGGSLLYAWMELNNKENPFYERFDELLDICEKYDVTLSLGDACRPGCIEDSTDASQIEELIALGELTKRAWDRNVQVIIEGPGHMTLDEIETNMKIEKKLCHGAPFYVLGPIVTDIAPGYDHITSAIGGAIAATHGADFLCYVTPAEHLRLPNLDDMKEGIIATKIAAHAADLAKGVKGARDWDNAMAKARRDLDWERMFELSIDEEKARRYREESKAKSKDSCTMCGKMCAVRNMNRVTEGKDLNMLRDDD</sequence>
<protein>
    <recommendedName>
        <fullName evidence="1">Phosphomethylpyrimidine synthase</fullName>
        <ecNumber evidence="1">4.1.99.17</ecNumber>
    </recommendedName>
    <alternativeName>
        <fullName evidence="1">Hydroxymethylpyrimidine phosphate synthase</fullName>
        <shortName evidence="1">HMP-P synthase</shortName>
        <shortName evidence="1">HMP-phosphate synthase</shortName>
        <shortName evidence="1">HMPP synthase</shortName>
    </alternativeName>
    <alternativeName>
        <fullName evidence="1">Thiamine biosynthesis protein ThiC</fullName>
    </alternativeName>
</protein>
<evidence type="ECO:0000255" key="1">
    <source>
        <dbReference type="HAMAP-Rule" id="MF_00089"/>
    </source>
</evidence>
<organism>
    <name type="scientific">Clostridium botulinum (strain Loch Maree / Type A3)</name>
    <dbReference type="NCBI Taxonomy" id="498214"/>
    <lineage>
        <taxon>Bacteria</taxon>
        <taxon>Bacillati</taxon>
        <taxon>Bacillota</taxon>
        <taxon>Clostridia</taxon>
        <taxon>Eubacteriales</taxon>
        <taxon>Clostridiaceae</taxon>
        <taxon>Clostridium</taxon>
    </lineage>
</organism>
<comment type="function">
    <text evidence="1">Catalyzes the synthesis of the hydroxymethylpyrimidine phosphate (HMP-P) moiety of thiamine from aminoimidazole ribotide (AIR) in a radical S-adenosyl-L-methionine (SAM)-dependent reaction.</text>
</comment>
<comment type="catalytic activity">
    <reaction evidence="1">
        <text>5-amino-1-(5-phospho-beta-D-ribosyl)imidazole + S-adenosyl-L-methionine = 4-amino-2-methyl-5-(phosphooxymethyl)pyrimidine + CO + 5'-deoxyadenosine + formate + L-methionine + 3 H(+)</text>
        <dbReference type="Rhea" id="RHEA:24840"/>
        <dbReference type="ChEBI" id="CHEBI:15378"/>
        <dbReference type="ChEBI" id="CHEBI:15740"/>
        <dbReference type="ChEBI" id="CHEBI:17245"/>
        <dbReference type="ChEBI" id="CHEBI:17319"/>
        <dbReference type="ChEBI" id="CHEBI:57844"/>
        <dbReference type="ChEBI" id="CHEBI:58354"/>
        <dbReference type="ChEBI" id="CHEBI:59789"/>
        <dbReference type="ChEBI" id="CHEBI:137981"/>
        <dbReference type="EC" id="4.1.99.17"/>
    </reaction>
</comment>
<comment type="cofactor">
    <cofactor evidence="1">
        <name>[4Fe-4S] cluster</name>
        <dbReference type="ChEBI" id="CHEBI:49883"/>
    </cofactor>
    <text evidence="1">Binds 1 [4Fe-4S] cluster per subunit. The cluster is coordinated with 3 cysteines and an exchangeable S-adenosyl-L-methionine.</text>
</comment>
<comment type="pathway">
    <text evidence="1">Cofactor biosynthesis; thiamine diphosphate biosynthesis.</text>
</comment>
<comment type="similarity">
    <text evidence="1">Belongs to the ThiC family.</text>
</comment>
<proteinExistence type="inferred from homology"/>
<accession>B1KZJ7</accession>
<reference key="1">
    <citation type="journal article" date="2007" name="PLoS ONE">
        <title>Analysis of the neurotoxin complex genes in Clostridium botulinum A1-A4 and B1 strains: BoNT/A3, /Ba4 and /B1 clusters are located within plasmids.</title>
        <authorList>
            <person name="Smith T.J."/>
            <person name="Hill K.K."/>
            <person name="Foley B.T."/>
            <person name="Detter J.C."/>
            <person name="Munk A.C."/>
            <person name="Bruce D.C."/>
            <person name="Doggett N.A."/>
            <person name="Smith L.A."/>
            <person name="Marks J.D."/>
            <person name="Xie G."/>
            <person name="Brettin T.S."/>
        </authorList>
    </citation>
    <scope>NUCLEOTIDE SEQUENCE [LARGE SCALE GENOMIC DNA]</scope>
    <source>
        <strain>Loch Maree / Type A3</strain>
    </source>
</reference>
<dbReference type="EC" id="4.1.99.17" evidence="1"/>
<dbReference type="EMBL" id="CP000962">
    <property type="protein sequence ID" value="ACA54287.1"/>
    <property type="molecule type" value="Genomic_DNA"/>
</dbReference>
<dbReference type="RefSeq" id="WP_012342413.1">
    <property type="nucleotide sequence ID" value="NC_010520.1"/>
</dbReference>
<dbReference type="SMR" id="B1KZJ7"/>
<dbReference type="KEGG" id="cbl:CLK_2303"/>
<dbReference type="HOGENOM" id="CLU_013181_2_1_9"/>
<dbReference type="UniPathway" id="UPA00060"/>
<dbReference type="GO" id="GO:0005829">
    <property type="term" value="C:cytosol"/>
    <property type="evidence" value="ECO:0007669"/>
    <property type="project" value="TreeGrafter"/>
</dbReference>
<dbReference type="GO" id="GO:0051539">
    <property type="term" value="F:4 iron, 4 sulfur cluster binding"/>
    <property type="evidence" value="ECO:0007669"/>
    <property type="project" value="UniProtKB-KW"/>
</dbReference>
<dbReference type="GO" id="GO:0016830">
    <property type="term" value="F:carbon-carbon lyase activity"/>
    <property type="evidence" value="ECO:0007669"/>
    <property type="project" value="InterPro"/>
</dbReference>
<dbReference type="GO" id="GO:0008270">
    <property type="term" value="F:zinc ion binding"/>
    <property type="evidence" value="ECO:0007669"/>
    <property type="project" value="UniProtKB-UniRule"/>
</dbReference>
<dbReference type="GO" id="GO:0009228">
    <property type="term" value="P:thiamine biosynthetic process"/>
    <property type="evidence" value="ECO:0007669"/>
    <property type="project" value="UniProtKB-KW"/>
</dbReference>
<dbReference type="GO" id="GO:0009229">
    <property type="term" value="P:thiamine diphosphate biosynthetic process"/>
    <property type="evidence" value="ECO:0007669"/>
    <property type="project" value="UniProtKB-UniRule"/>
</dbReference>
<dbReference type="FunFam" id="3.20.20.540:FF:000001">
    <property type="entry name" value="Phosphomethylpyrimidine synthase"/>
    <property type="match status" value="1"/>
</dbReference>
<dbReference type="Gene3D" id="6.10.250.620">
    <property type="match status" value="1"/>
</dbReference>
<dbReference type="Gene3D" id="3.20.20.540">
    <property type="entry name" value="Radical SAM ThiC family, central domain"/>
    <property type="match status" value="1"/>
</dbReference>
<dbReference type="HAMAP" id="MF_00089">
    <property type="entry name" value="ThiC"/>
    <property type="match status" value="1"/>
</dbReference>
<dbReference type="InterPro" id="IPR037509">
    <property type="entry name" value="ThiC"/>
</dbReference>
<dbReference type="InterPro" id="IPR038521">
    <property type="entry name" value="ThiC/Bza_core_dom"/>
</dbReference>
<dbReference type="InterPro" id="IPR002817">
    <property type="entry name" value="ThiC/BzaA/B"/>
</dbReference>
<dbReference type="NCBIfam" id="NF009895">
    <property type="entry name" value="PRK13352.1"/>
    <property type="match status" value="1"/>
</dbReference>
<dbReference type="NCBIfam" id="TIGR00190">
    <property type="entry name" value="thiC"/>
    <property type="match status" value="1"/>
</dbReference>
<dbReference type="PANTHER" id="PTHR30557:SF1">
    <property type="entry name" value="PHOSPHOMETHYLPYRIMIDINE SYNTHASE, CHLOROPLASTIC"/>
    <property type="match status" value="1"/>
</dbReference>
<dbReference type="PANTHER" id="PTHR30557">
    <property type="entry name" value="THIAMINE BIOSYNTHESIS PROTEIN THIC"/>
    <property type="match status" value="1"/>
</dbReference>
<dbReference type="Pfam" id="PF01964">
    <property type="entry name" value="ThiC_Rad_SAM"/>
    <property type="match status" value="1"/>
</dbReference>
<dbReference type="SFLD" id="SFLDF00407">
    <property type="entry name" value="phosphomethylpyrimidine_syntha"/>
    <property type="match status" value="1"/>
</dbReference>
<dbReference type="SFLD" id="SFLDG01114">
    <property type="entry name" value="phosphomethylpyrimidine_syntha"/>
    <property type="match status" value="1"/>
</dbReference>
<dbReference type="SFLD" id="SFLDS00113">
    <property type="entry name" value="Radical_SAM_Phosphomethylpyrim"/>
    <property type="match status" value="1"/>
</dbReference>
<feature type="chain" id="PRO_1000093202" description="Phosphomethylpyrimidine synthase">
    <location>
        <begin position="1"/>
        <end position="437"/>
    </location>
</feature>
<feature type="binding site" evidence="1">
    <location>
        <position position="69"/>
    </location>
    <ligand>
        <name>substrate</name>
    </ligand>
</feature>
<feature type="binding site" evidence="1">
    <location>
        <position position="98"/>
    </location>
    <ligand>
        <name>substrate</name>
    </ligand>
</feature>
<feature type="binding site" evidence="1">
    <location>
        <position position="127"/>
    </location>
    <ligand>
        <name>substrate</name>
    </ligand>
</feature>
<feature type="binding site" evidence="1">
    <location>
        <position position="163"/>
    </location>
    <ligand>
        <name>substrate</name>
    </ligand>
</feature>
<feature type="binding site" evidence="1">
    <location>
        <begin position="185"/>
        <end position="187"/>
    </location>
    <ligand>
        <name>substrate</name>
    </ligand>
</feature>
<feature type="binding site" evidence="1">
    <location>
        <begin position="226"/>
        <end position="229"/>
    </location>
    <ligand>
        <name>substrate</name>
    </ligand>
</feature>
<feature type="binding site" evidence="1">
    <location>
        <position position="265"/>
    </location>
    <ligand>
        <name>substrate</name>
    </ligand>
</feature>
<feature type="binding site" evidence="1">
    <location>
        <position position="269"/>
    </location>
    <ligand>
        <name>Zn(2+)</name>
        <dbReference type="ChEBI" id="CHEBI:29105"/>
    </ligand>
</feature>
<feature type="binding site" evidence="1">
    <location>
        <position position="292"/>
    </location>
    <ligand>
        <name>substrate</name>
    </ligand>
</feature>
<feature type="binding site" evidence="1">
    <location>
        <position position="333"/>
    </location>
    <ligand>
        <name>Zn(2+)</name>
        <dbReference type="ChEBI" id="CHEBI:29105"/>
    </ligand>
</feature>
<feature type="binding site" evidence="1">
    <location>
        <position position="409"/>
    </location>
    <ligand>
        <name>[4Fe-4S] cluster</name>
        <dbReference type="ChEBI" id="CHEBI:49883"/>
        <note>4Fe-4S-S-AdoMet</note>
    </ligand>
</feature>
<feature type="binding site" evidence="1">
    <location>
        <position position="412"/>
    </location>
    <ligand>
        <name>[4Fe-4S] cluster</name>
        <dbReference type="ChEBI" id="CHEBI:49883"/>
        <note>4Fe-4S-S-AdoMet</note>
    </ligand>
</feature>
<feature type="binding site" evidence="1">
    <location>
        <position position="416"/>
    </location>
    <ligand>
        <name>[4Fe-4S] cluster</name>
        <dbReference type="ChEBI" id="CHEBI:49883"/>
        <note>4Fe-4S-S-AdoMet</note>
    </ligand>
</feature>